<organism>
    <name type="scientific">Streptococcus pneumoniae serotype 2 (strain D39 / NCTC 7466)</name>
    <dbReference type="NCBI Taxonomy" id="373153"/>
    <lineage>
        <taxon>Bacteria</taxon>
        <taxon>Bacillati</taxon>
        <taxon>Bacillota</taxon>
        <taxon>Bacilli</taxon>
        <taxon>Lactobacillales</taxon>
        <taxon>Streptococcaceae</taxon>
        <taxon>Streptococcus</taxon>
    </lineage>
</organism>
<reference key="1">
    <citation type="journal article" date="2007" name="J. Bacteriol.">
        <title>Genome sequence of Avery's virulent serotype 2 strain D39 of Streptococcus pneumoniae and comparison with that of unencapsulated laboratory strain R6.</title>
        <authorList>
            <person name="Lanie J.A."/>
            <person name="Ng W.-L."/>
            <person name="Kazmierczak K.M."/>
            <person name="Andrzejewski T.M."/>
            <person name="Davidsen T.M."/>
            <person name="Wayne K.J."/>
            <person name="Tettelin H."/>
            <person name="Glass J.I."/>
            <person name="Winkler M.E."/>
        </authorList>
    </citation>
    <scope>NUCLEOTIDE SEQUENCE [LARGE SCALE GENOMIC DNA]</scope>
    <source>
        <strain>D39 / NCTC 7466</strain>
    </source>
</reference>
<name>Y975_STRP2</name>
<evidence type="ECO:0000255" key="1">
    <source>
        <dbReference type="PROSITE-ProRule" id="PRU01182"/>
    </source>
</evidence>
<evidence type="ECO:0000305" key="2"/>
<accession>Q04KJ8</accession>
<dbReference type="EMBL" id="CP000410">
    <property type="protein sequence ID" value="ABJ54908.1"/>
    <property type="molecule type" value="Genomic_DNA"/>
</dbReference>
<dbReference type="SMR" id="Q04KJ8"/>
<dbReference type="PaxDb" id="373153-SPD_0975"/>
<dbReference type="KEGG" id="spd:SPD_0975"/>
<dbReference type="eggNOG" id="COG2003">
    <property type="taxonomic scope" value="Bacteria"/>
</dbReference>
<dbReference type="HOGENOM" id="CLU_073529_0_2_9"/>
<dbReference type="BioCyc" id="SPNE373153:G1G6V-1065-MONOMER"/>
<dbReference type="Proteomes" id="UP000001452">
    <property type="component" value="Chromosome"/>
</dbReference>
<dbReference type="GO" id="GO:0046872">
    <property type="term" value="F:metal ion binding"/>
    <property type="evidence" value="ECO:0007669"/>
    <property type="project" value="UniProtKB-KW"/>
</dbReference>
<dbReference type="GO" id="GO:0008237">
    <property type="term" value="F:metallopeptidase activity"/>
    <property type="evidence" value="ECO:0007669"/>
    <property type="project" value="UniProtKB-KW"/>
</dbReference>
<dbReference type="GO" id="GO:0006508">
    <property type="term" value="P:proteolysis"/>
    <property type="evidence" value="ECO:0007669"/>
    <property type="project" value="UniProtKB-KW"/>
</dbReference>
<dbReference type="CDD" id="cd08071">
    <property type="entry name" value="MPN_DUF2466"/>
    <property type="match status" value="1"/>
</dbReference>
<dbReference type="Gene3D" id="3.40.140.10">
    <property type="entry name" value="Cytidine Deaminase, domain 2"/>
    <property type="match status" value="1"/>
</dbReference>
<dbReference type="InterPro" id="IPR037518">
    <property type="entry name" value="MPN"/>
</dbReference>
<dbReference type="InterPro" id="IPR025657">
    <property type="entry name" value="RadC_JAB"/>
</dbReference>
<dbReference type="InterPro" id="IPR010994">
    <property type="entry name" value="RuvA_2-like"/>
</dbReference>
<dbReference type="InterPro" id="IPR001405">
    <property type="entry name" value="UPF0758"/>
</dbReference>
<dbReference type="InterPro" id="IPR020891">
    <property type="entry name" value="UPF0758_CS"/>
</dbReference>
<dbReference type="InterPro" id="IPR046778">
    <property type="entry name" value="UPF0758_N"/>
</dbReference>
<dbReference type="NCBIfam" id="NF000642">
    <property type="entry name" value="PRK00024.1"/>
    <property type="match status" value="1"/>
</dbReference>
<dbReference type="NCBIfam" id="TIGR00608">
    <property type="entry name" value="radc"/>
    <property type="match status" value="1"/>
</dbReference>
<dbReference type="PANTHER" id="PTHR30471">
    <property type="entry name" value="DNA REPAIR PROTEIN RADC"/>
    <property type="match status" value="1"/>
</dbReference>
<dbReference type="PANTHER" id="PTHR30471:SF3">
    <property type="entry name" value="UPF0758 PROTEIN YEES-RELATED"/>
    <property type="match status" value="1"/>
</dbReference>
<dbReference type="Pfam" id="PF04002">
    <property type="entry name" value="RadC"/>
    <property type="match status" value="1"/>
</dbReference>
<dbReference type="Pfam" id="PF20582">
    <property type="entry name" value="UPF0758_N"/>
    <property type="match status" value="1"/>
</dbReference>
<dbReference type="SUPFAM" id="SSF47781">
    <property type="entry name" value="RuvA domain 2-like"/>
    <property type="match status" value="1"/>
</dbReference>
<dbReference type="PROSITE" id="PS50249">
    <property type="entry name" value="MPN"/>
    <property type="match status" value="1"/>
</dbReference>
<dbReference type="PROSITE" id="PS01302">
    <property type="entry name" value="UPF0758"/>
    <property type="match status" value="1"/>
</dbReference>
<sequence length="226" mass="25522">MYSISFQEDSLLPRERLAKEGVEALSNQELLAILLRTGTRQASVFEIAQKVLNNLSSLTDLKKMTLQELQSLSGIGRVKAIELQAMIELGHRIHKHETLEMESILSSQKLAKKMQQELGDKKQEHLVALYLNTQNQIIHQQTIFIGSVTRSIAEPREILHYAIKHMATSLVLVHNHPSGAVAPSQNDDHVTKLVKEACELMGIVLLDHLIVSHSNYFSYREKTDLI</sequence>
<gene>
    <name type="ordered locus">SPD_0975</name>
</gene>
<comment type="similarity">
    <text evidence="2">Belongs to the UPF0758 family.</text>
</comment>
<protein>
    <recommendedName>
        <fullName>UPF0758 protein SPD_0975</fullName>
    </recommendedName>
</protein>
<proteinExistence type="inferred from homology"/>
<feature type="chain" id="PRO_1000089856" description="UPF0758 protein SPD_0975">
    <location>
        <begin position="1"/>
        <end position="226"/>
    </location>
</feature>
<feature type="domain" description="MPN" evidence="1">
    <location>
        <begin position="103"/>
        <end position="225"/>
    </location>
</feature>
<feature type="short sequence motif" description="JAMM motif" evidence="1">
    <location>
        <begin position="174"/>
        <end position="187"/>
    </location>
</feature>
<feature type="binding site" evidence="1">
    <location>
        <position position="174"/>
    </location>
    <ligand>
        <name>Zn(2+)</name>
        <dbReference type="ChEBI" id="CHEBI:29105"/>
        <note>catalytic</note>
    </ligand>
</feature>
<feature type="binding site" evidence="1">
    <location>
        <position position="176"/>
    </location>
    <ligand>
        <name>Zn(2+)</name>
        <dbReference type="ChEBI" id="CHEBI:29105"/>
        <note>catalytic</note>
    </ligand>
</feature>
<feature type="binding site" evidence="1">
    <location>
        <position position="187"/>
    </location>
    <ligand>
        <name>Zn(2+)</name>
        <dbReference type="ChEBI" id="CHEBI:29105"/>
        <note>catalytic</note>
    </ligand>
</feature>
<keyword id="KW-0378">Hydrolase</keyword>
<keyword id="KW-0479">Metal-binding</keyword>
<keyword id="KW-0482">Metalloprotease</keyword>
<keyword id="KW-0645">Protease</keyword>
<keyword id="KW-1185">Reference proteome</keyword>
<keyword id="KW-0862">Zinc</keyword>